<evidence type="ECO:0000255" key="1">
    <source>
        <dbReference type="HAMAP-Rule" id="MF_00457"/>
    </source>
</evidence>
<feature type="chain" id="PRO_1000081126" description="UPF0173 metal-dependent hydrolase PTH_1415">
    <location>
        <begin position="1"/>
        <end position="228"/>
    </location>
</feature>
<accession>A5D2B7</accession>
<gene>
    <name type="ordered locus">PTH_1415</name>
</gene>
<reference key="1">
    <citation type="journal article" date="2008" name="Genome Res.">
        <title>The genome of Pelotomaculum thermopropionicum reveals niche-associated evolution in anaerobic microbiota.</title>
        <authorList>
            <person name="Kosaka T."/>
            <person name="Kato S."/>
            <person name="Shimoyama T."/>
            <person name="Ishii S."/>
            <person name="Abe T."/>
            <person name="Watanabe K."/>
        </authorList>
    </citation>
    <scope>NUCLEOTIDE SEQUENCE [LARGE SCALE GENOMIC DNA]</scope>
    <source>
        <strain>DSM 13744 / JCM 10971 / SI</strain>
    </source>
</reference>
<organism>
    <name type="scientific">Pelotomaculum thermopropionicum (strain DSM 13744 / JCM 10971 / SI)</name>
    <dbReference type="NCBI Taxonomy" id="370438"/>
    <lineage>
        <taxon>Bacteria</taxon>
        <taxon>Bacillati</taxon>
        <taxon>Bacillota</taxon>
        <taxon>Clostridia</taxon>
        <taxon>Eubacteriales</taxon>
        <taxon>Desulfotomaculaceae</taxon>
        <taxon>Pelotomaculum</taxon>
    </lineage>
</organism>
<proteinExistence type="inferred from homology"/>
<protein>
    <recommendedName>
        <fullName evidence="1">UPF0173 metal-dependent hydrolase PTH_1415</fullName>
    </recommendedName>
</protein>
<comment type="similarity">
    <text evidence="1">Belongs to the UPF0173 family.</text>
</comment>
<name>Y1415_PELTS</name>
<dbReference type="EMBL" id="AP009389">
    <property type="protein sequence ID" value="BAF59596.1"/>
    <property type="molecule type" value="Genomic_DNA"/>
</dbReference>
<dbReference type="SMR" id="A5D2B7"/>
<dbReference type="STRING" id="370438.PTH_1415"/>
<dbReference type="KEGG" id="pth:PTH_1415"/>
<dbReference type="eggNOG" id="COG2220">
    <property type="taxonomic scope" value="Bacteria"/>
</dbReference>
<dbReference type="HOGENOM" id="CLU_070010_4_1_9"/>
<dbReference type="Proteomes" id="UP000006556">
    <property type="component" value="Chromosome"/>
</dbReference>
<dbReference type="GO" id="GO:0016787">
    <property type="term" value="F:hydrolase activity"/>
    <property type="evidence" value="ECO:0007669"/>
    <property type="project" value="UniProtKB-UniRule"/>
</dbReference>
<dbReference type="Gene3D" id="3.60.15.10">
    <property type="entry name" value="Ribonuclease Z/Hydroxyacylglutathione hydrolase-like"/>
    <property type="match status" value="1"/>
</dbReference>
<dbReference type="HAMAP" id="MF_00457">
    <property type="entry name" value="UPF0173"/>
    <property type="match status" value="1"/>
</dbReference>
<dbReference type="InterPro" id="IPR001279">
    <property type="entry name" value="Metallo-B-lactamas"/>
</dbReference>
<dbReference type="InterPro" id="IPR036866">
    <property type="entry name" value="RibonucZ/Hydroxyglut_hydro"/>
</dbReference>
<dbReference type="InterPro" id="IPR022877">
    <property type="entry name" value="UPF0173"/>
</dbReference>
<dbReference type="InterPro" id="IPR050114">
    <property type="entry name" value="UPF0173_UPF0282_UlaG_hydrolase"/>
</dbReference>
<dbReference type="NCBIfam" id="NF001911">
    <property type="entry name" value="PRK00685.1"/>
    <property type="match status" value="1"/>
</dbReference>
<dbReference type="PANTHER" id="PTHR43546:SF3">
    <property type="entry name" value="UPF0173 METAL-DEPENDENT HYDROLASE MJ1163"/>
    <property type="match status" value="1"/>
</dbReference>
<dbReference type="PANTHER" id="PTHR43546">
    <property type="entry name" value="UPF0173 METAL-DEPENDENT HYDROLASE MJ1163-RELATED"/>
    <property type="match status" value="1"/>
</dbReference>
<dbReference type="Pfam" id="PF13483">
    <property type="entry name" value="Lactamase_B_3"/>
    <property type="match status" value="1"/>
</dbReference>
<dbReference type="SMART" id="SM00849">
    <property type="entry name" value="Lactamase_B"/>
    <property type="match status" value="1"/>
</dbReference>
<dbReference type="SUPFAM" id="SSF56281">
    <property type="entry name" value="Metallo-hydrolase/oxidoreductase"/>
    <property type="match status" value="1"/>
</dbReference>
<keyword id="KW-0378">Hydrolase</keyword>
<keyword id="KW-1185">Reference proteome</keyword>
<sequence>MKVTFLGHAGFLIEGSKKIVIDPFLTGNPLAKAKAEEVKADLVLVSHGHGDHLGDAVAIAGQSNALVVSVYELADYCARHGAQSHGMHIGGSRAFDGVKIKLTPAWHGAGFGTGEGPMEYLGNPCGFVIKIDGKTIYHSGDTGLFGDMELIGRFNSLDLALLPIGDNFTMGPEDALEAVKMLKPKTVIPMHYNTWPLIEQDPAEFKSAVEAATSAEVKILSPGESMEL</sequence>